<reference key="1">
    <citation type="journal article" date="2005" name="Science">
        <title>The transcriptional landscape of the mammalian genome.</title>
        <authorList>
            <person name="Carninci P."/>
            <person name="Kasukawa T."/>
            <person name="Katayama S."/>
            <person name="Gough J."/>
            <person name="Frith M.C."/>
            <person name="Maeda N."/>
            <person name="Oyama R."/>
            <person name="Ravasi T."/>
            <person name="Lenhard B."/>
            <person name="Wells C."/>
            <person name="Kodzius R."/>
            <person name="Shimokawa K."/>
            <person name="Bajic V.B."/>
            <person name="Brenner S.E."/>
            <person name="Batalov S."/>
            <person name="Forrest A.R."/>
            <person name="Zavolan M."/>
            <person name="Davis M.J."/>
            <person name="Wilming L.G."/>
            <person name="Aidinis V."/>
            <person name="Allen J.E."/>
            <person name="Ambesi-Impiombato A."/>
            <person name="Apweiler R."/>
            <person name="Aturaliya R.N."/>
            <person name="Bailey T.L."/>
            <person name="Bansal M."/>
            <person name="Baxter L."/>
            <person name="Beisel K.W."/>
            <person name="Bersano T."/>
            <person name="Bono H."/>
            <person name="Chalk A.M."/>
            <person name="Chiu K.P."/>
            <person name="Choudhary V."/>
            <person name="Christoffels A."/>
            <person name="Clutterbuck D.R."/>
            <person name="Crowe M.L."/>
            <person name="Dalla E."/>
            <person name="Dalrymple B.P."/>
            <person name="de Bono B."/>
            <person name="Della Gatta G."/>
            <person name="di Bernardo D."/>
            <person name="Down T."/>
            <person name="Engstrom P."/>
            <person name="Fagiolini M."/>
            <person name="Faulkner G."/>
            <person name="Fletcher C.F."/>
            <person name="Fukushima T."/>
            <person name="Furuno M."/>
            <person name="Futaki S."/>
            <person name="Gariboldi M."/>
            <person name="Georgii-Hemming P."/>
            <person name="Gingeras T.R."/>
            <person name="Gojobori T."/>
            <person name="Green R.E."/>
            <person name="Gustincich S."/>
            <person name="Harbers M."/>
            <person name="Hayashi Y."/>
            <person name="Hensch T.K."/>
            <person name="Hirokawa N."/>
            <person name="Hill D."/>
            <person name="Huminiecki L."/>
            <person name="Iacono M."/>
            <person name="Ikeo K."/>
            <person name="Iwama A."/>
            <person name="Ishikawa T."/>
            <person name="Jakt M."/>
            <person name="Kanapin A."/>
            <person name="Katoh M."/>
            <person name="Kawasawa Y."/>
            <person name="Kelso J."/>
            <person name="Kitamura H."/>
            <person name="Kitano H."/>
            <person name="Kollias G."/>
            <person name="Krishnan S.P."/>
            <person name="Kruger A."/>
            <person name="Kummerfeld S.K."/>
            <person name="Kurochkin I.V."/>
            <person name="Lareau L.F."/>
            <person name="Lazarevic D."/>
            <person name="Lipovich L."/>
            <person name="Liu J."/>
            <person name="Liuni S."/>
            <person name="McWilliam S."/>
            <person name="Madan Babu M."/>
            <person name="Madera M."/>
            <person name="Marchionni L."/>
            <person name="Matsuda H."/>
            <person name="Matsuzawa S."/>
            <person name="Miki H."/>
            <person name="Mignone F."/>
            <person name="Miyake S."/>
            <person name="Morris K."/>
            <person name="Mottagui-Tabar S."/>
            <person name="Mulder N."/>
            <person name="Nakano N."/>
            <person name="Nakauchi H."/>
            <person name="Ng P."/>
            <person name="Nilsson R."/>
            <person name="Nishiguchi S."/>
            <person name="Nishikawa S."/>
            <person name="Nori F."/>
            <person name="Ohara O."/>
            <person name="Okazaki Y."/>
            <person name="Orlando V."/>
            <person name="Pang K.C."/>
            <person name="Pavan W.J."/>
            <person name="Pavesi G."/>
            <person name="Pesole G."/>
            <person name="Petrovsky N."/>
            <person name="Piazza S."/>
            <person name="Reed J."/>
            <person name="Reid J.F."/>
            <person name="Ring B.Z."/>
            <person name="Ringwald M."/>
            <person name="Rost B."/>
            <person name="Ruan Y."/>
            <person name="Salzberg S.L."/>
            <person name="Sandelin A."/>
            <person name="Schneider C."/>
            <person name="Schoenbach C."/>
            <person name="Sekiguchi K."/>
            <person name="Semple C.A."/>
            <person name="Seno S."/>
            <person name="Sessa L."/>
            <person name="Sheng Y."/>
            <person name="Shibata Y."/>
            <person name="Shimada H."/>
            <person name="Shimada K."/>
            <person name="Silva D."/>
            <person name="Sinclair B."/>
            <person name="Sperling S."/>
            <person name="Stupka E."/>
            <person name="Sugiura K."/>
            <person name="Sultana R."/>
            <person name="Takenaka Y."/>
            <person name="Taki K."/>
            <person name="Tammoja K."/>
            <person name="Tan S.L."/>
            <person name="Tang S."/>
            <person name="Taylor M.S."/>
            <person name="Tegner J."/>
            <person name="Teichmann S.A."/>
            <person name="Ueda H.R."/>
            <person name="van Nimwegen E."/>
            <person name="Verardo R."/>
            <person name="Wei C.L."/>
            <person name="Yagi K."/>
            <person name="Yamanishi H."/>
            <person name="Zabarovsky E."/>
            <person name="Zhu S."/>
            <person name="Zimmer A."/>
            <person name="Hide W."/>
            <person name="Bult C."/>
            <person name="Grimmond S.M."/>
            <person name="Teasdale R.D."/>
            <person name="Liu E.T."/>
            <person name="Brusic V."/>
            <person name="Quackenbush J."/>
            <person name="Wahlestedt C."/>
            <person name="Mattick J.S."/>
            <person name="Hume D.A."/>
            <person name="Kai C."/>
            <person name="Sasaki D."/>
            <person name="Tomaru Y."/>
            <person name="Fukuda S."/>
            <person name="Kanamori-Katayama M."/>
            <person name="Suzuki M."/>
            <person name="Aoki J."/>
            <person name="Arakawa T."/>
            <person name="Iida J."/>
            <person name="Imamura K."/>
            <person name="Itoh M."/>
            <person name="Kato T."/>
            <person name="Kawaji H."/>
            <person name="Kawagashira N."/>
            <person name="Kawashima T."/>
            <person name="Kojima M."/>
            <person name="Kondo S."/>
            <person name="Konno H."/>
            <person name="Nakano K."/>
            <person name="Ninomiya N."/>
            <person name="Nishio T."/>
            <person name="Okada M."/>
            <person name="Plessy C."/>
            <person name="Shibata K."/>
            <person name="Shiraki T."/>
            <person name="Suzuki S."/>
            <person name="Tagami M."/>
            <person name="Waki K."/>
            <person name="Watahiki A."/>
            <person name="Okamura-Oho Y."/>
            <person name="Suzuki H."/>
            <person name="Kawai J."/>
            <person name="Hayashizaki Y."/>
        </authorList>
    </citation>
    <scope>NUCLEOTIDE SEQUENCE [LARGE SCALE MRNA]</scope>
    <source>
        <strain>C57BL/6J</strain>
        <tissue>Testis</tissue>
    </source>
</reference>
<reference key="2">
    <citation type="journal article" date="2004" name="Genome Res.">
        <title>The status, quality, and expansion of the NIH full-length cDNA project: the Mammalian Gene Collection (MGC).</title>
        <authorList>
            <consortium name="The MGC Project Team"/>
        </authorList>
    </citation>
    <scope>NUCLEOTIDE SEQUENCE [LARGE SCALE MRNA]</scope>
    <source>
        <tissue>Testis</tissue>
    </source>
</reference>
<reference key="3">
    <citation type="journal article" date="2010" name="Cell">
        <title>A tissue-specific atlas of mouse protein phosphorylation and expression.</title>
        <authorList>
            <person name="Huttlin E.L."/>
            <person name="Jedrychowski M.P."/>
            <person name="Elias J.E."/>
            <person name="Goswami T."/>
            <person name="Rad R."/>
            <person name="Beausoleil S.A."/>
            <person name="Villen J."/>
            <person name="Haas W."/>
            <person name="Sowa M.E."/>
            <person name="Gygi S.P."/>
        </authorList>
    </citation>
    <scope>IDENTIFICATION BY MASS SPECTROMETRY [LARGE SCALE ANALYSIS]</scope>
    <source>
        <tissue>Testis</tissue>
    </source>
</reference>
<reference key="4">
    <citation type="journal article" date="2021" name="Proc. Natl. Acad. Sci. U.S.A.">
        <title>SPATA33 localizes calcineurin to the mitochondria and regulates sperm motility in mice.</title>
        <authorList>
            <person name="Miyata H."/>
            <person name="Oura S."/>
            <person name="Morohoshi A."/>
            <person name="Shimada K."/>
            <person name="Mashiko D."/>
            <person name="Oyama Y."/>
            <person name="Kaneda Y."/>
            <person name="Matsumura T."/>
            <person name="Abbasi F."/>
            <person name="Ikawa M."/>
        </authorList>
    </citation>
    <scope>FUNCTION</scope>
    <scope>DISRUPTION PHENOTYPE</scope>
    <scope>TISSUE SPECIFICITY</scope>
</reference>
<reference evidence="7" key="5">
    <citation type="journal article" date="2023" name="Cell">
        <title>Structures of sperm flagellar doublet microtubules expand the genetic spectrum of male infertility.</title>
        <authorList>
            <person name="Zhou L."/>
            <person name="Liu H."/>
            <person name="Liu S."/>
            <person name="Yang X."/>
            <person name="Dong Y."/>
            <person name="Pan Y."/>
            <person name="Xiao Z."/>
            <person name="Zheng B."/>
            <person name="Sun Y."/>
            <person name="Huang P."/>
            <person name="Zhang X."/>
            <person name="Hu J."/>
            <person name="Sun R."/>
            <person name="Feng S."/>
            <person name="Zhu Y."/>
            <person name="Liu M."/>
            <person name="Gui M."/>
            <person name="Wu J."/>
        </authorList>
    </citation>
    <scope>STRUCTURE BY ELECTRON MICROSCOPY (3.50 ANGSTROMS) OF SPERM FLAGELLAR DOUBLET MICROTUBULES</scope>
    <scope>SUBCELLULAR LOCATION</scope>
    <scope>SUBUNIT</scope>
</reference>
<reference evidence="5 6" key="6">
    <citation type="journal article" date="2023" name="Cell Discov.">
        <title>In-cell structural insight into the stability of sperm microtubule doublet.</title>
        <authorList>
            <person name="Tai L."/>
            <person name="Yin G."/>
            <person name="Huang X."/>
            <person name="Sun F."/>
            <person name="Zhu Y."/>
        </authorList>
    </citation>
    <scope>STRUCTURE BY ELECTRON MICROSCOPY (4.50 ANGSTROMS)</scope>
    <scope>FUNCTION</scope>
    <scope>SUBUNIT</scope>
    <scope>SUBCELLULAR LOCATION</scope>
</reference>
<accession>Q9D9I1</accession>
<protein>
    <recommendedName>
        <fullName>Sperm-associated microtubule inner protein 10</fullName>
    </recommendedName>
    <alternativeName>
        <fullName>Testis-expressed protein 43</fullName>
    </alternativeName>
</protein>
<evidence type="ECO:0000256" key="1">
    <source>
        <dbReference type="SAM" id="MobiDB-lite"/>
    </source>
</evidence>
<evidence type="ECO:0000269" key="2">
    <source>
    </source>
</evidence>
<evidence type="ECO:0000269" key="3">
    <source>
    </source>
</evidence>
<evidence type="ECO:0000269" key="4">
    <source>
    </source>
</evidence>
<evidence type="ECO:0007744" key="5">
    <source>
        <dbReference type="PDB" id="8I7O"/>
    </source>
</evidence>
<evidence type="ECO:0007744" key="6">
    <source>
        <dbReference type="PDB" id="8I7R"/>
    </source>
</evidence>
<evidence type="ECO:0007744" key="7">
    <source>
        <dbReference type="PDB" id="8IYJ"/>
    </source>
</evidence>
<comment type="function">
    <text evidence="2 3 4">Microtubule inner protein (MIP) part of the dynein-decorated doublet microtubules (DMTs) in flagellum axoneme, which is required for flagellum beating (PubMed:34446558, PubMed:37295417, PubMed:37989994). May serve to reinforce and thus stabilize the microtubule structure in the sperm flagella (PubMed:34446558, PubMed:37295417). Involved in the regulation of sperm motility (PubMed:34446558).</text>
</comment>
<comment type="subunit">
    <text evidence="3 4">Microtubule inner protein component of sperm flagellar doublet microtubules.</text>
</comment>
<comment type="subcellular location">
    <subcellularLocation>
        <location evidence="3 4">Cytoplasm</location>
        <location evidence="3 4">Cytoskeleton</location>
        <location evidence="3 4">Flagellum axoneme</location>
    </subcellularLocation>
    <text evidence="3">Localizes at the ribbon and inner junction (IJ) between A- and B-tubules of the DMTs.</text>
</comment>
<comment type="tissue specificity">
    <text evidence="2">Expressed predominantly in the testis.</text>
</comment>
<comment type="disruption phenotype">
    <text evidence="2">No defects seen in the sperm morphology and the percentage of motile spermatozoa is comparable (PubMed:34446558). Howevwer, velocity parameters such as average path velocity, straight-line velocity, and curvilinear velocity are slightly decreased in the spermatozoa (PubMed:34446558).</text>
</comment>
<organism>
    <name type="scientific">Mus musculus</name>
    <name type="common">Mouse</name>
    <dbReference type="NCBI Taxonomy" id="10090"/>
    <lineage>
        <taxon>Eukaryota</taxon>
        <taxon>Metazoa</taxon>
        <taxon>Chordata</taxon>
        <taxon>Craniata</taxon>
        <taxon>Vertebrata</taxon>
        <taxon>Euteleostomi</taxon>
        <taxon>Mammalia</taxon>
        <taxon>Eutheria</taxon>
        <taxon>Euarchontoglires</taxon>
        <taxon>Glires</taxon>
        <taxon>Rodentia</taxon>
        <taxon>Myomorpha</taxon>
        <taxon>Muroidea</taxon>
        <taxon>Muridae</taxon>
        <taxon>Murinae</taxon>
        <taxon>Mus</taxon>
        <taxon>Mus</taxon>
    </lineage>
</organism>
<proteinExistence type="evidence at protein level"/>
<sequence length="141" mass="16282">MASEKDDGPALPKLDDDNQTAENTCKPAEEQPQQLRWDDIHLPRFSLKQGMIPTRYVMPWKENMKFRNVNLQQAEACGIYAGPLEDSLFWGYSERLCHGEDRKAVLKKGLPEIKITDMPLHSPLSRYQSTVISHGFRRRLI</sequence>
<keyword id="KW-0002">3D-structure</keyword>
<keyword id="KW-0966">Cell projection</keyword>
<keyword id="KW-0969">Cilium</keyword>
<keyword id="KW-0963">Cytoplasm</keyword>
<keyword id="KW-0206">Cytoskeleton</keyword>
<keyword id="KW-0282">Flagellum</keyword>
<keyword id="KW-1185">Reference proteome</keyword>
<name>SMI10_MOUSE</name>
<dbReference type="EMBL" id="AK006893">
    <property type="protein sequence ID" value="BAB24783.2"/>
    <property type="molecule type" value="mRNA"/>
</dbReference>
<dbReference type="EMBL" id="BC099538">
    <property type="protein sequence ID" value="AAH99538.1"/>
    <property type="molecule type" value="mRNA"/>
</dbReference>
<dbReference type="CCDS" id="CCDS29260.1"/>
<dbReference type="RefSeq" id="NP_080375.2">
    <property type="nucleotide sequence ID" value="NM_026099.3"/>
</dbReference>
<dbReference type="PDB" id="8I7O">
    <property type="method" value="EM"/>
    <property type="resolution" value="4.50 A"/>
    <property type="chains" value="M2/M3=1-141"/>
</dbReference>
<dbReference type="PDB" id="8I7R">
    <property type="method" value="EM"/>
    <property type="resolution" value="6.50 A"/>
    <property type="chains" value="M1/M2/M3=1-141"/>
</dbReference>
<dbReference type="PDB" id="8IYJ">
    <property type="method" value="EM"/>
    <property type="resolution" value="3.50 A"/>
    <property type="chains" value="h1/h2/h3/h4=1-141"/>
</dbReference>
<dbReference type="PDBsum" id="8I7O"/>
<dbReference type="PDBsum" id="8I7R"/>
<dbReference type="PDBsum" id="8IYJ"/>
<dbReference type="EMDB" id="EMD-35229"/>
<dbReference type="EMDB" id="EMD-35230"/>
<dbReference type="EMDB" id="EMD-35823"/>
<dbReference type="SMR" id="Q9D9I1"/>
<dbReference type="FunCoup" id="Q9D9I1">
    <property type="interactions" value="1"/>
</dbReference>
<dbReference type="STRING" id="10090.ENSMUSP00000038152"/>
<dbReference type="PaxDb" id="10090-ENSMUSP00000038152"/>
<dbReference type="ProteomicsDB" id="262878"/>
<dbReference type="Antibodypedia" id="51544">
    <property type="antibodies" value="67 antibodies from 9 providers"/>
</dbReference>
<dbReference type="Ensembl" id="ENSMUST00000035640.13">
    <property type="protein sequence ID" value="ENSMUSP00000038152.7"/>
    <property type="gene ID" value="ENSMUSG00000032900.16"/>
</dbReference>
<dbReference type="GeneID" id="67343"/>
<dbReference type="KEGG" id="mmu:67343"/>
<dbReference type="UCSC" id="uc008eyr.1">
    <property type="organism name" value="mouse"/>
</dbReference>
<dbReference type="AGR" id="MGI:1914593"/>
<dbReference type="CTD" id="389320"/>
<dbReference type="MGI" id="MGI:1914593">
    <property type="gene designation" value="Spmip10"/>
</dbReference>
<dbReference type="VEuPathDB" id="HostDB:ENSMUSG00000032900"/>
<dbReference type="eggNOG" id="ENOG502S426">
    <property type="taxonomic scope" value="Eukaryota"/>
</dbReference>
<dbReference type="GeneTree" id="ENSGT00390000006935"/>
<dbReference type="HOGENOM" id="CLU_131594_1_0_1"/>
<dbReference type="InParanoid" id="Q9D9I1"/>
<dbReference type="OMA" id="PKITNNC"/>
<dbReference type="OrthoDB" id="9972026at2759"/>
<dbReference type="PhylomeDB" id="Q9D9I1"/>
<dbReference type="TreeFam" id="TF339864"/>
<dbReference type="BioGRID-ORCS" id="67343">
    <property type="hits" value="1 hit in 76 CRISPR screens"/>
</dbReference>
<dbReference type="ChiTaRS" id="Tex43">
    <property type="organism name" value="mouse"/>
</dbReference>
<dbReference type="PRO" id="PR:Q9D9I1"/>
<dbReference type="Proteomes" id="UP000000589">
    <property type="component" value="Chromosome 18"/>
</dbReference>
<dbReference type="RNAct" id="Q9D9I1">
    <property type="molecule type" value="protein"/>
</dbReference>
<dbReference type="Bgee" id="ENSMUSG00000032900">
    <property type="expression patterns" value="Expressed in seminiferous tubule of testis and 49 other cell types or tissues"/>
</dbReference>
<dbReference type="ExpressionAtlas" id="Q9D9I1">
    <property type="expression patterns" value="baseline and differential"/>
</dbReference>
<dbReference type="GO" id="GO:0160112">
    <property type="term" value="C:axonemal B tubule inner sheath"/>
    <property type="evidence" value="ECO:0000314"/>
    <property type="project" value="UniProtKB"/>
</dbReference>
<dbReference type="GO" id="GO:0036126">
    <property type="term" value="C:sperm flagellum"/>
    <property type="evidence" value="ECO:0000314"/>
    <property type="project" value="UniProtKB"/>
</dbReference>
<dbReference type="GO" id="GO:0030317">
    <property type="term" value="P:flagellated sperm motility"/>
    <property type="evidence" value="ECO:0000314"/>
    <property type="project" value="UniProtKB"/>
</dbReference>
<dbReference type="InterPro" id="IPR027965">
    <property type="entry name" value="SPMIP10"/>
</dbReference>
<dbReference type="PANTHER" id="PTHR35247">
    <property type="entry name" value="TESTIS-EXPRESSED PROTEIN 43"/>
    <property type="match status" value="1"/>
</dbReference>
<dbReference type="PANTHER" id="PTHR35247:SF1">
    <property type="entry name" value="TESTIS-EXPRESSED PROTEIN 43"/>
    <property type="match status" value="1"/>
</dbReference>
<dbReference type="Pfam" id="PF14983">
    <property type="entry name" value="SPMIP10-like"/>
    <property type="match status" value="1"/>
</dbReference>
<gene>
    <name type="primary">Spmip10</name>
    <name type="synonym">C5orf48</name>
    <name type="synonym">Tex43</name>
</gene>
<feature type="chain" id="PRO_0000321825" description="Sperm-associated microtubule inner protein 10">
    <location>
        <begin position="1"/>
        <end position="141"/>
    </location>
</feature>
<feature type="region of interest" description="Disordered" evidence="1">
    <location>
        <begin position="1"/>
        <end position="33"/>
    </location>
</feature>
<feature type="compositionally biased region" description="Basic and acidic residues" evidence="1">
    <location>
        <begin position="1"/>
        <end position="16"/>
    </location>
</feature>